<gene>
    <name evidence="1" type="primary">rplO</name>
    <name type="ordered locus">jhp_1221</name>
</gene>
<sequence length="133" mass="14634">MGLENLKPAKGSVKKIKRVGRGQGSGMGKTATRGGKGQTARTGYKAKRGFEGGQQPLQRRLPKIGFRTKDSHIYSINVEKNEAIKSLEEITFSSLRALHHFPLYIEGVKLIGKDAKNLASKIKDERIKTSGQK</sequence>
<name>RL15_HELPJ</name>
<keyword id="KW-0687">Ribonucleoprotein</keyword>
<keyword id="KW-0689">Ribosomal protein</keyword>
<keyword id="KW-0694">RNA-binding</keyword>
<keyword id="KW-0699">rRNA-binding</keyword>
<reference key="1">
    <citation type="journal article" date="1999" name="Nature">
        <title>Genomic sequence comparison of two unrelated isolates of the human gastric pathogen Helicobacter pylori.</title>
        <authorList>
            <person name="Alm R.A."/>
            <person name="Ling L.-S.L."/>
            <person name="Moir D.T."/>
            <person name="King B.L."/>
            <person name="Brown E.D."/>
            <person name="Doig P.C."/>
            <person name="Smith D.R."/>
            <person name="Noonan B."/>
            <person name="Guild B.C."/>
            <person name="deJonge B.L."/>
            <person name="Carmel G."/>
            <person name="Tummino P.J."/>
            <person name="Caruso A."/>
            <person name="Uria-Nickelsen M."/>
            <person name="Mills D.M."/>
            <person name="Ives C."/>
            <person name="Gibson R."/>
            <person name="Merberg D."/>
            <person name="Mills S.D."/>
            <person name="Jiang Q."/>
            <person name="Taylor D.E."/>
            <person name="Vovis G.F."/>
            <person name="Trust T.J."/>
        </authorList>
    </citation>
    <scope>NUCLEOTIDE SEQUENCE [LARGE SCALE GENOMIC DNA]</scope>
    <source>
        <strain>J99 / ATCC 700824</strain>
    </source>
</reference>
<protein>
    <recommendedName>
        <fullName evidence="1">Large ribosomal subunit protein uL15</fullName>
    </recommendedName>
    <alternativeName>
        <fullName evidence="3">50S ribosomal protein L15</fullName>
    </alternativeName>
</protein>
<comment type="function">
    <text evidence="1">Binds to the 23S rRNA.</text>
</comment>
<comment type="subunit">
    <text evidence="1">Part of the 50S ribosomal subunit.</text>
</comment>
<comment type="similarity">
    <text evidence="1">Belongs to the universal ribosomal protein uL15 family.</text>
</comment>
<dbReference type="EMBL" id="AE001439">
    <property type="protein sequence ID" value="AAD06805.1"/>
    <property type="molecule type" value="Genomic_DNA"/>
</dbReference>
<dbReference type="PIR" id="E71833">
    <property type="entry name" value="E71833"/>
</dbReference>
<dbReference type="RefSeq" id="WP_000522173.1">
    <property type="nucleotide sequence ID" value="NZ_CP011330.1"/>
</dbReference>
<dbReference type="SMR" id="Q9ZJS8"/>
<dbReference type="KEGG" id="hpj:jhp_1221"/>
<dbReference type="PATRIC" id="fig|85963.30.peg.1350"/>
<dbReference type="eggNOG" id="COG0200">
    <property type="taxonomic scope" value="Bacteria"/>
</dbReference>
<dbReference type="Proteomes" id="UP000000804">
    <property type="component" value="Chromosome"/>
</dbReference>
<dbReference type="GO" id="GO:0022625">
    <property type="term" value="C:cytosolic large ribosomal subunit"/>
    <property type="evidence" value="ECO:0007669"/>
    <property type="project" value="TreeGrafter"/>
</dbReference>
<dbReference type="GO" id="GO:0019843">
    <property type="term" value="F:rRNA binding"/>
    <property type="evidence" value="ECO:0007669"/>
    <property type="project" value="UniProtKB-UniRule"/>
</dbReference>
<dbReference type="GO" id="GO:0003735">
    <property type="term" value="F:structural constituent of ribosome"/>
    <property type="evidence" value="ECO:0007669"/>
    <property type="project" value="InterPro"/>
</dbReference>
<dbReference type="GO" id="GO:0006412">
    <property type="term" value="P:translation"/>
    <property type="evidence" value="ECO:0007669"/>
    <property type="project" value="UniProtKB-UniRule"/>
</dbReference>
<dbReference type="HAMAP" id="MF_01341">
    <property type="entry name" value="Ribosomal_uL15"/>
    <property type="match status" value="1"/>
</dbReference>
<dbReference type="InterPro" id="IPR030878">
    <property type="entry name" value="Ribosomal_uL15"/>
</dbReference>
<dbReference type="InterPro" id="IPR036227">
    <property type="entry name" value="Ribosomal_uL15/eL18_sf"/>
</dbReference>
<dbReference type="InterPro" id="IPR005749">
    <property type="entry name" value="Ribosomal_uL15_bac-type"/>
</dbReference>
<dbReference type="NCBIfam" id="TIGR01071">
    <property type="entry name" value="rplO_bact"/>
    <property type="match status" value="1"/>
</dbReference>
<dbReference type="PANTHER" id="PTHR12934">
    <property type="entry name" value="50S RIBOSOMAL PROTEIN L15"/>
    <property type="match status" value="1"/>
</dbReference>
<dbReference type="PANTHER" id="PTHR12934:SF11">
    <property type="entry name" value="LARGE RIBOSOMAL SUBUNIT PROTEIN UL15M"/>
    <property type="match status" value="1"/>
</dbReference>
<dbReference type="SUPFAM" id="SSF52080">
    <property type="entry name" value="Ribosomal proteins L15p and L18e"/>
    <property type="match status" value="1"/>
</dbReference>
<evidence type="ECO:0000255" key="1">
    <source>
        <dbReference type="HAMAP-Rule" id="MF_01341"/>
    </source>
</evidence>
<evidence type="ECO:0000256" key="2">
    <source>
        <dbReference type="SAM" id="MobiDB-lite"/>
    </source>
</evidence>
<evidence type="ECO:0000305" key="3"/>
<feature type="chain" id="PRO_0000104733" description="Large ribosomal subunit protein uL15">
    <location>
        <begin position="1"/>
        <end position="133"/>
    </location>
</feature>
<feature type="region of interest" description="Disordered" evidence="2">
    <location>
        <begin position="1"/>
        <end position="64"/>
    </location>
</feature>
<accession>Q9ZJS8</accession>
<organism>
    <name type="scientific">Helicobacter pylori (strain J99 / ATCC 700824)</name>
    <name type="common">Campylobacter pylori J99</name>
    <dbReference type="NCBI Taxonomy" id="85963"/>
    <lineage>
        <taxon>Bacteria</taxon>
        <taxon>Pseudomonadati</taxon>
        <taxon>Campylobacterota</taxon>
        <taxon>Epsilonproteobacteria</taxon>
        <taxon>Campylobacterales</taxon>
        <taxon>Helicobacteraceae</taxon>
        <taxon>Helicobacter</taxon>
    </lineage>
</organism>
<proteinExistence type="inferred from homology"/>